<keyword id="KW-0067">ATP-binding</keyword>
<keyword id="KW-0325">Glycoprotein</keyword>
<keyword id="KW-0472">Membrane</keyword>
<keyword id="KW-0547">Nucleotide-binding</keyword>
<keyword id="KW-1185">Reference proteome</keyword>
<keyword id="KW-0677">Repeat</keyword>
<keyword id="KW-0812">Transmembrane</keyword>
<keyword id="KW-1133">Transmembrane helix</keyword>
<keyword id="KW-0813">Transport</keyword>
<organism>
    <name type="scientific">Arabidopsis thaliana</name>
    <name type="common">Mouse-ear cress</name>
    <dbReference type="NCBI Taxonomy" id="3702"/>
    <lineage>
        <taxon>Eukaryota</taxon>
        <taxon>Viridiplantae</taxon>
        <taxon>Streptophyta</taxon>
        <taxon>Embryophyta</taxon>
        <taxon>Tracheophyta</taxon>
        <taxon>Spermatophyta</taxon>
        <taxon>Magnoliopsida</taxon>
        <taxon>eudicotyledons</taxon>
        <taxon>Gunneridae</taxon>
        <taxon>Pentapetalae</taxon>
        <taxon>rosids</taxon>
        <taxon>malvids</taxon>
        <taxon>Brassicales</taxon>
        <taxon>Brassicaceae</taxon>
        <taxon>Camelineae</taxon>
        <taxon>Arabidopsis</taxon>
    </lineage>
</organism>
<accession>Q9LSJ8</accession>
<accession>Q8RXD2</accession>
<name>AB16B_ARATH</name>
<sequence length="1228" mass="135916">MKTWGSMRSIFMHADGVDWMLMGLGLIGAVGDGFITPILFFITAMLLNDFGSFSFNDETFMQPISKNALAMLYVACASWVICFLEGYCWTRTGERQAAKMRERYLRAVLRQDVGYFDLHVTSTSDIITSVSSDSLVIQDFLSEKLPNILMNASAFVGSYIVGFMLLWRLTIVGFPFIILLLIPGLMYGRALIGISRKIREEYNEAGSIAEQAISSVRTVYAFVSEKKMIEKFSDALQGSVKLGLRQGLAKGIAIGSNGIVYAIWGFLTWYGSRMVMNYGYKGGTVSTVTVCVTFGGTALGQALSNLKYFSEAFVAGERIQKMIKRVPDIDSDNLNGHILETIRGEVEFNNVKCKYPSRPETLIFDDLCLKIPSGKTVALVGGSGSGKSTVISLLQRFYDPNEGDILIDSVSINNMQVKWLRSQMGMVSQEPSLFATSIKENILFGKEDASFDEVVEAAKASNAHNFISQFPHGYQTQVGERGVHMSGGQKQRIAIARALIKSPIILLLDEATSALDLESERVVQEALDNASVGRTTIVIAHRLSTIRNADIICVLHNGCIVETGSHDKLMEIDGKYTSLVRLQQMKNEESCDNTSVGVKEGRVSSLRNDLDYNPRDLAHSMSSSIVTNLSDSIPQDKKPLVPSFKRLMAMNRPEWKHALCGCLSASLGGAVQPIYAYSSGLMISVFFLTNHEQIKENTRIYVLLFFGLALFTFFTSISQQYSFSYMGEYLTKRIREQMLSKILTFEVNWFDEEENSSGAICSRLAKDANVVRSLVGERMSLLVQTISTVMVACTIGLVIAWRFTIVMISVQPVIIVCYYIQRVLLKNMSKKAIIAQDESSKLAAEAVSNIRTITTFSSQERIMKLLERVQEGPRRESARQSWLAGIMLGTTQSLITCTSALNFWYGGKLIADGKMVSKAFFELFLIFKTTGRAIAEAGTMTTDLAKGSNSVDSVFTVLDRRTTIEPENPDGYILEKIKGQITFLNVDFAYPTRPNMVIFNNFSIEIHEGKSTAIVGPSRSGKSTVIGLIERFYDPLQGIVKIDGRDIRSYHLRSLRQHMSLVSQEPTLFAGTIRENIMYGRASNKIDESEIIEAGKTANAHEFITSLSDGYDTYCGDRGVQLSGGQKQRIAIARTILKNPSILLLDEATSALDSQSERVVQDALEHVMVGKTSVVIAHRLSTIQNCDTIAVLDKGKVVESGTHASLLAKGPTGSYFSLVSLQRKVRYV</sequence>
<dbReference type="EMBL" id="AB026644">
    <property type="protein sequence ID" value="BAB02852.1"/>
    <property type="molecule type" value="Genomic_DNA"/>
</dbReference>
<dbReference type="EMBL" id="CP002686">
    <property type="protein sequence ID" value="AEE77437.1"/>
    <property type="molecule type" value="Genomic_DNA"/>
</dbReference>
<dbReference type="EMBL" id="AY081330">
    <property type="protein sequence ID" value="AAL91219.1"/>
    <property type="status" value="ALT_INIT"/>
    <property type="molecule type" value="mRNA"/>
</dbReference>
<dbReference type="EMBL" id="BT008368">
    <property type="protein sequence ID" value="AAP37727.1"/>
    <property type="molecule type" value="mRNA"/>
</dbReference>
<dbReference type="RefSeq" id="NP_189477.4">
    <property type="nucleotide sequence ID" value="NM_113756.5"/>
</dbReference>
<dbReference type="SMR" id="Q9LSJ8"/>
<dbReference type="BioGRID" id="7794">
    <property type="interactions" value="7"/>
</dbReference>
<dbReference type="FunCoup" id="Q9LSJ8">
    <property type="interactions" value="107"/>
</dbReference>
<dbReference type="IntAct" id="Q9LSJ8">
    <property type="interactions" value="6"/>
</dbReference>
<dbReference type="STRING" id="3702.Q9LSJ8"/>
<dbReference type="GlyCosmos" id="Q9LSJ8">
    <property type="glycosylation" value="6 sites, No reported glycans"/>
</dbReference>
<dbReference type="GlyGen" id="Q9LSJ8">
    <property type="glycosylation" value="7 sites"/>
</dbReference>
<dbReference type="iPTMnet" id="Q9LSJ8"/>
<dbReference type="PaxDb" id="3702-AT3G28360.1"/>
<dbReference type="ProteomicsDB" id="245120"/>
<dbReference type="EnsemblPlants" id="AT3G28360.1">
    <property type="protein sequence ID" value="AT3G28360.1"/>
    <property type="gene ID" value="AT3G28360"/>
</dbReference>
<dbReference type="GeneID" id="822465"/>
<dbReference type="Gramene" id="AT3G28360.1">
    <property type="protein sequence ID" value="AT3G28360.1"/>
    <property type="gene ID" value="AT3G28360"/>
</dbReference>
<dbReference type="KEGG" id="ath:AT3G28360"/>
<dbReference type="Araport" id="AT3G28360"/>
<dbReference type="TAIR" id="AT3G28360">
    <property type="gene designation" value="ABCB16"/>
</dbReference>
<dbReference type="eggNOG" id="KOG0055">
    <property type="taxonomic scope" value="Eukaryota"/>
</dbReference>
<dbReference type="HOGENOM" id="CLU_000604_17_2_1"/>
<dbReference type="InParanoid" id="Q9LSJ8"/>
<dbReference type="OMA" id="QQMDNKD"/>
<dbReference type="PhylomeDB" id="Q9LSJ8"/>
<dbReference type="BioCyc" id="ARA:AT3G28360-MONOMER"/>
<dbReference type="PRO" id="PR:Q9LSJ8"/>
<dbReference type="Proteomes" id="UP000006548">
    <property type="component" value="Chromosome 3"/>
</dbReference>
<dbReference type="ExpressionAtlas" id="Q9LSJ8">
    <property type="expression patterns" value="baseline and differential"/>
</dbReference>
<dbReference type="GO" id="GO:0016020">
    <property type="term" value="C:membrane"/>
    <property type="evidence" value="ECO:0007669"/>
    <property type="project" value="UniProtKB-SubCell"/>
</dbReference>
<dbReference type="GO" id="GO:0140359">
    <property type="term" value="F:ABC-type transporter activity"/>
    <property type="evidence" value="ECO:0007669"/>
    <property type="project" value="InterPro"/>
</dbReference>
<dbReference type="GO" id="GO:0005524">
    <property type="term" value="F:ATP binding"/>
    <property type="evidence" value="ECO:0007669"/>
    <property type="project" value="UniProtKB-KW"/>
</dbReference>
<dbReference type="GO" id="GO:0016887">
    <property type="term" value="F:ATP hydrolysis activity"/>
    <property type="evidence" value="ECO:0007669"/>
    <property type="project" value="InterPro"/>
</dbReference>
<dbReference type="CDD" id="cd18577">
    <property type="entry name" value="ABC_6TM_Pgp_ABCB1_D1_like"/>
    <property type="match status" value="1"/>
</dbReference>
<dbReference type="CDD" id="cd18578">
    <property type="entry name" value="ABC_6TM_Pgp_ABCB1_D2_like"/>
    <property type="match status" value="1"/>
</dbReference>
<dbReference type="CDD" id="cd03249">
    <property type="entry name" value="ABC_MTABC3_MDL1_MDL2"/>
    <property type="match status" value="2"/>
</dbReference>
<dbReference type="FunFam" id="3.40.50.300:FF:000205">
    <property type="entry name" value="ABC transporter B family member 4"/>
    <property type="match status" value="2"/>
</dbReference>
<dbReference type="Gene3D" id="1.20.1560.10">
    <property type="entry name" value="ABC transporter type 1, transmembrane domain"/>
    <property type="match status" value="1"/>
</dbReference>
<dbReference type="Gene3D" id="3.40.50.300">
    <property type="entry name" value="P-loop containing nucleotide triphosphate hydrolases"/>
    <property type="match status" value="2"/>
</dbReference>
<dbReference type="InterPro" id="IPR003593">
    <property type="entry name" value="AAA+_ATPase"/>
</dbReference>
<dbReference type="InterPro" id="IPR011527">
    <property type="entry name" value="ABC1_TM_dom"/>
</dbReference>
<dbReference type="InterPro" id="IPR036640">
    <property type="entry name" value="ABC1_TM_sf"/>
</dbReference>
<dbReference type="InterPro" id="IPR003439">
    <property type="entry name" value="ABC_transporter-like_ATP-bd"/>
</dbReference>
<dbReference type="InterPro" id="IPR017871">
    <property type="entry name" value="ABC_transporter-like_CS"/>
</dbReference>
<dbReference type="InterPro" id="IPR027417">
    <property type="entry name" value="P-loop_NTPase"/>
</dbReference>
<dbReference type="PANTHER" id="PTHR45136">
    <property type="entry name" value="ABC TRANSPORTER DOMAIN-CONTAINING PROTEIN"/>
    <property type="match status" value="1"/>
</dbReference>
<dbReference type="PANTHER" id="PTHR45136:SF2">
    <property type="entry name" value="ABC TRANSPORTER DOMAIN-CONTAINING PROTEIN"/>
    <property type="match status" value="1"/>
</dbReference>
<dbReference type="Pfam" id="PF00664">
    <property type="entry name" value="ABC_membrane"/>
    <property type="match status" value="2"/>
</dbReference>
<dbReference type="Pfam" id="PF00005">
    <property type="entry name" value="ABC_tran"/>
    <property type="match status" value="2"/>
</dbReference>
<dbReference type="SMART" id="SM00382">
    <property type="entry name" value="AAA"/>
    <property type="match status" value="2"/>
</dbReference>
<dbReference type="SUPFAM" id="SSF90123">
    <property type="entry name" value="ABC transporter transmembrane region"/>
    <property type="match status" value="2"/>
</dbReference>
<dbReference type="SUPFAM" id="SSF52540">
    <property type="entry name" value="P-loop containing nucleoside triphosphate hydrolases"/>
    <property type="match status" value="2"/>
</dbReference>
<dbReference type="PROSITE" id="PS50929">
    <property type="entry name" value="ABC_TM1F"/>
    <property type="match status" value="2"/>
</dbReference>
<dbReference type="PROSITE" id="PS00211">
    <property type="entry name" value="ABC_TRANSPORTER_1"/>
    <property type="match status" value="2"/>
</dbReference>
<dbReference type="PROSITE" id="PS50893">
    <property type="entry name" value="ABC_TRANSPORTER_2"/>
    <property type="match status" value="2"/>
</dbReference>
<feature type="chain" id="PRO_0000227929" description="ABC transporter B family member 16">
    <location>
        <begin position="1"/>
        <end position="1228"/>
    </location>
</feature>
<feature type="transmembrane region" description="Helical" evidence="3">
    <location>
        <begin position="22"/>
        <end position="42"/>
    </location>
</feature>
<feature type="transmembrane region" description="Helical" evidence="3">
    <location>
        <begin position="69"/>
        <end position="89"/>
    </location>
</feature>
<feature type="transmembrane region" description="Helical" evidence="3">
    <location>
        <begin position="145"/>
        <end position="167"/>
    </location>
</feature>
<feature type="transmembrane region" description="Helical" evidence="3">
    <location>
        <begin position="171"/>
        <end position="193"/>
    </location>
</feature>
<feature type="transmembrane region" description="Helical" evidence="3">
    <location>
        <begin position="251"/>
        <end position="271"/>
    </location>
</feature>
<feature type="transmembrane region" description="Helical" evidence="3">
    <location>
        <begin position="283"/>
        <end position="303"/>
    </location>
</feature>
<feature type="transmembrane region" description="Helical" evidence="3">
    <location>
        <begin position="667"/>
        <end position="687"/>
    </location>
</feature>
<feature type="transmembrane region" description="Helical" evidence="3">
    <location>
        <begin position="700"/>
        <end position="720"/>
    </location>
</feature>
<feature type="transmembrane region" description="Helical" evidence="3">
    <location>
        <begin position="781"/>
        <end position="801"/>
    </location>
</feature>
<feature type="transmembrane region" description="Helical" evidence="3">
    <location>
        <begin position="805"/>
        <end position="825"/>
    </location>
</feature>
<feature type="transmembrane region" description="Helical" evidence="3">
    <location>
        <begin position="881"/>
        <end position="901"/>
    </location>
</feature>
<feature type="transmembrane region" description="Helical" evidence="3">
    <location>
        <begin position="920"/>
        <end position="940"/>
    </location>
</feature>
<feature type="domain" description="ABC transmembrane type-1 1" evidence="3">
    <location>
        <begin position="22"/>
        <end position="311"/>
    </location>
</feature>
<feature type="domain" description="ABC transporter 1" evidence="2">
    <location>
        <begin position="346"/>
        <end position="582"/>
    </location>
</feature>
<feature type="domain" description="ABC transmembrane type-1 2" evidence="3">
    <location>
        <begin position="658"/>
        <end position="946"/>
    </location>
</feature>
<feature type="domain" description="ABC transporter 2" evidence="2">
    <location>
        <begin position="981"/>
        <end position="1219"/>
    </location>
</feature>
<feature type="binding site" evidence="2">
    <location>
        <begin position="381"/>
        <end position="388"/>
    </location>
    <ligand>
        <name>ATP</name>
        <dbReference type="ChEBI" id="CHEBI:30616"/>
        <label>1</label>
    </ligand>
</feature>
<feature type="binding site" evidence="2">
    <location>
        <begin position="1016"/>
        <end position="1023"/>
    </location>
    <ligand>
        <name>ATP</name>
        <dbReference type="ChEBI" id="CHEBI:30616"/>
        <label>2</label>
    </ligand>
</feature>
<feature type="glycosylation site" description="N-linked (GlcNAc...) asparagine" evidence="1">
    <location>
        <position position="529"/>
    </location>
</feature>
<feature type="glycosylation site" description="N-linked (GlcNAc...) asparagine" evidence="1">
    <location>
        <position position="593"/>
    </location>
</feature>
<feature type="glycosylation site" description="N-linked (GlcNAc...) asparagine" evidence="1">
    <location>
        <position position="628"/>
    </location>
</feature>
<feature type="glycosylation site" description="N-linked (GlcNAc...) asparagine" evidence="1">
    <location>
        <position position="755"/>
    </location>
</feature>
<feature type="glycosylation site" description="N-linked (GlcNAc...) asparagine" evidence="1">
    <location>
        <position position="827"/>
    </location>
</feature>
<feature type="glycosylation site" description="N-linked (GlcNAc...) asparagine" evidence="1">
    <location>
        <position position="1001"/>
    </location>
</feature>
<protein>
    <recommendedName>
        <fullName>ABC transporter B family member 16</fullName>
        <shortName>ABC transporter ABCB.16</shortName>
        <shortName>AtABCB16</shortName>
    </recommendedName>
    <alternativeName>
        <fullName>Multidrug resistance protein 18</fullName>
    </alternativeName>
    <alternativeName>
        <fullName>P-glycoprotein 16</fullName>
    </alternativeName>
</protein>
<proteinExistence type="evidence at transcript level"/>
<comment type="subcellular location">
    <subcellularLocation>
        <location evidence="3">Membrane</location>
        <topology evidence="3">Multi-pass membrane protein</topology>
    </subcellularLocation>
</comment>
<comment type="similarity">
    <text evidence="4">Belongs to the ABC transporter superfamily. ABCB family. Multidrug resistance exporter (TC 3.A.1.201) subfamily.</text>
</comment>
<comment type="sequence caution" evidence="4">
    <conflict type="erroneous initiation">
        <sequence resource="EMBL-CDS" id="AAL91219"/>
    </conflict>
</comment>
<reference key="1">
    <citation type="journal article" date="2000" name="DNA Res.">
        <title>Structural analysis of Arabidopsis thaliana chromosome 3. I. Sequence features of the regions of 4,504,864 bp covered by sixty P1 and TAC clones.</title>
        <authorList>
            <person name="Sato S."/>
            <person name="Nakamura Y."/>
            <person name="Kaneko T."/>
            <person name="Katoh T."/>
            <person name="Asamizu E."/>
            <person name="Tabata S."/>
        </authorList>
    </citation>
    <scope>NUCLEOTIDE SEQUENCE [LARGE SCALE GENOMIC DNA]</scope>
    <source>
        <strain>cv. Columbia</strain>
    </source>
</reference>
<reference key="2">
    <citation type="journal article" date="2017" name="Plant J.">
        <title>Araport11: a complete reannotation of the Arabidopsis thaliana reference genome.</title>
        <authorList>
            <person name="Cheng C.Y."/>
            <person name="Krishnakumar V."/>
            <person name="Chan A.P."/>
            <person name="Thibaud-Nissen F."/>
            <person name="Schobel S."/>
            <person name="Town C.D."/>
        </authorList>
    </citation>
    <scope>GENOME REANNOTATION</scope>
    <source>
        <strain>cv. Columbia</strain>
    </source>
</reference>
<reference key="3">
    <citation type="journal article" date="2003" name="Science">
        <title>Empirical analysis of transcriptional activity in the Arabidopsis genome.</title>
        <authorList>
            <person name="Yamada K."/>
            <person name="Lim J."/>
            <person name="Dale J.M."/>
            <person name="Chen H."/>
            <person name="Shinn P."/>
            <person name="Palm C.J."/>
            <person name="Southwick A.M."/>
            <person name="Wu H.C."/>
            <person name="Kim C.J."/>
            <person name="Nguyen M."/>
            <person name="Pham P.K."/>
            <person name="Cheuk R.F."/>
            <person name="Karlin-Newmann G."/>
            <person name="Liu S.X."/>
            <person name="Lam B."/>
            <person name="Sakano H."/>
            <person name="Wu T."/>
            <person name="Yu G."/>
            <person name="Miranda M."/>
            <person name="Quach H.L."/>
            <person name="Tripp M."/>
            <person name="Chang C.H."/>
            <person name="Lee J.M."/>
            <person name="Toriumi M.J."/>
            <person name="Chan M.M."/>
            <person name="Tang C.C."/>
            <person name="Onodera C.S."/>
            <person name="Deng J.M."/>
            <person name="Akiyama K."/>
            <person name="Ansari Y."/>
            <person name="Arakawa T."/>
            <person name="Banh J."/>
            <person name="Banno F."/>
            <person name="Bowser L."/>
            <person name="Brooks S.Y."/>
            <person name="Carninci P."/>
            <person name="Chao Q."/>
            <person name="Choy N."/>
            <person name="Enju A."/>
            <person name="Goldsmith A.D."/>
            <person name="Gurjal M."/>
            <person name="Hansen N.F."/>
            <person name="Hayashizaki Y."/>
            <person name="Johnson-Hopson C."/>
            <person name="Hsuan V.W."/>
            <person name="Iida K."/>
            <person name="Karnes M."/>
            <person name="Khan S."/>
            <person name="Koesema E."/>
            <person name="Ishida J."/>
            <person name="Jiang P.X."/>
            <person name="Jones T."/>
            <person name="Kawai J."/>
            <person name="Kamiya A."/>
            <person name="Meyers C."/>
            <person name="Nakajima M."/>
            <person name="Narusaka M."/>
            <person name="Seki M."/>
            <person name="Sakurai T."/>
            <person name="Satou M."/>
            <person name="Tamse R."/>
            <person name="Vaysberg M."/>
            <person name="Wallender E.K."/>
            <person name="Wong C."/>
            <person name="Yamamura Y."/>
            <person name="Yuan S."/>
            <person name="Shinozaki K."/>
            <person name="Davis R.W."/>
            <person name="Theologis A."/>
            <person name="Ecker J.R."/>
        </authorList>
    </citation>
    <scope>NUCLEOTIDE SEQUENCE [LARGE SCALE MRNA] OF 612-1228</scope>
    <source>
        <strain>cv. Columbia</strain>
    </source>
</reference>
<reference key="4">
    <citation type="journal article" date="2001" name="J. Biol. Chem.">
        <title>The Arabidopsis thaliana ABC protein superfamily, a complete inventory.</title>
        <authorList>
            <person name="Sanchez-Fernandez R."/>
            <person name="Davies T.G."/>
            <person name="Coleman J.O."/>
            <person name="Rea P.A."/>
        </authorList>
    </citation>
    <scope>GENE FAMILY</scope>
    <scope>NOMENCLATURE</scope>
</reference>
<reference key="5">
    <citation type="journal article" date="2008" name="Trends Plant Sci.">
        <title>Plant ABC proteins - a unified nomenclature and updated inventory.</title>
        <authorList>
            <person name="Verrier P.J."/>
            <person name="Bird D."/>
            <person name="Burla B."/>
            <person name="Dassa E."/>
            <person name="Forestier C."/>
            <person name="Geisler M."/>
            <person name="Klein M."/>
            <person name="Kolukisaoglu H.U."/>
            <person name="Lee Y."/>
            <person name="Martinoia E."/>
            <person name="Murphy A."/>
            <person name="Rea P.A."/>
            <person name="Samuels L."/>
            <person name="Schulz B."/>
            <person name="Spalding E.J."/>
            <person name="Yazaki K."/>
            <person name="Theodoulou F.L."/>
        </authorList>
    </citation>
    <scope>GENE FAMILY</scope>
    <scope>NOMENCLATURE</scope>
</reference>
<gene>
    <name type="primary">ABCB16</name>
    <name type="synonym">MDR18</name>
    <name type="synonym">PGP16</name>
    <name type="ordered locus">At3g28360</name>
    <name type="ORF">MFJ20.4</name>
</gene>
<evidence type="ECO:0000255" key="1"/>
<evidence type="ECO:0000255" key="2">
    <source>
        <dbReference type="PROSITE-ProRule" id="PRU00434"/>
    </source>
</evidence>
<evidence type="ECO:0000255" key="3">
    <source>
        <dbReference type="PROSITE-ProRule" id="PRU00441"/>
    </source>
</evidence>
<evidence type="ECO:0000305" key="4"/>